<evidence type="ECO:0000269" key="1">
    <source>
    </source>
</evidence>
<evidence type="ECO:0000269" key="2">
    <source ref="1"/>
</evidence>
<evidence type="ECO:0000305" key="3"/>
<comment type="function">
    <text evidence="3">Possible mediator for cell division in the blooming process.</text>
</comment>
<comment type="developmental stage">
    <text evidence="1 2 3">Appears in the preblooming stage (G0/G1) of the algal life cycle and remains in the blooming stage (S and G2/M).</text>
</comment>
<comment type="miscellaneous">
    <text evidence="3">On the 2D-gel the determined pI of this protein is: 5.8, its MW is: 21.5 kDa.</text>
</comment>
<sequence>AEYDVSDADIEAFYQXXTMTW</sequence>
<keyword id="KW-0131">Cell cycle</keyword>
<keyword id="KW-0132">Cell division</keyword>
<keyword id="KW-0903">Direct protein sequencing</keyword>
<reference evidence="3" key="1">
    <citation type="thesis" date="2004" institute="The Hong Kong Polytechnic University" country="Hong Kong">
        <title>Proteomic approach to characterize differential protein expression in toxic and harmful algal bloom species (HABs).</title>
        <authorList>
            <person name="Chan L.L."/>
        </authorList>
    </citation>
    <scope>PROTEIN SEQUENCE</scope>
    <scope>DEVELOPMENTAL STAGE</scope>
    <source>
        <strain evidence="3">Hong Kong</strain>
    </source>
</reference>
<reference key="2">
    <citation type="journal article" date="2004" name="Proteomics">
        <title>Proteomic study of a model causative agent of harmful algal blooms, Prorocentrum triestinum II: the use of differentially expressed protein profiles under different growth phases and growth conditions for bloom prediction.</title>
        <authorList>
            <person name="Chan L.L."/>
            <person name="Hodgkiss I.J."/>
            <person name="Wan J.M.-F."/>
            <person name="Lum J.H.-K."/>
            <person name="Mak A.S.-C."/>
            <person name="Sit W.-H."/>
            <person name="Lo S.C.-L."/>
        </authorList>
    </citation>
    <scope>PROTEIN SEQUENCE</scope>
    <scope>DEVELOPMENTAL STAGE</scope>
    <source>
        <strain>Hong Kong</strain>
    </source>
</reference>
<protein>
    <recommendedName>
        <fullName>Preblooming protein 2</fullName>
        <shortName>PB2</shortName>
    </recommendedName>
</protein>
<accession>P83765</accession>
<feature type="chain" id="PRO_0000058240" description="Preblooming protein 2">
    <location>
        <begin position="1"/>
        <end position="21" status="greater than"/>
    </location>
</feature>
<feature type="non-terminal residue" evidence="3">
    <location>
        <position position="21"/>
    </location>
</feature>
<proteinExistence type="evidence at protein level"/>
<dbReference type="GO" id="GO:0051301">
    <property type="term" value="P:cell division"/>
    <property type="evidence" value="ECO:0007669"/>
    <property type="project" value="UniProtKB-KW"/>
</dbReference>
<name>PB2_PROTR</name>
<organism evidence="3">
    <name type="scientific">Prorocentrum triestinum</name>
    <name type="common">Red tide alga</name>
    <dbReference type="NCBI Taxonomy" id="39450"/>
    <lineage>
        <taxon>Eukaryota</taxon>
        <taxon>Sar</taxon>
        <taxon>Alveolata</taxon>
        <taxon>Dinophyceae</taxon>
        <taxon>Prorocentrales</taxon>
        <taxon>Prorocentraceae</taxon>
        <taxon>Prorocentrum</taxon>
    </lineage>
</organism>